<gene>
    <name evidence="1" type="primary">rpmC</name>
    <name type="ordered locus">Nwi_1372</name>
</gene>
<evidence type="ECO:0000255" key="1">
    <source>
        <dbReference type="HAMAP-Rule" id="MF_00374"/>
    </source>
</evidence>
<evidence type="ECO:0000305" key="2"/>
<protein>
    <recommendedName>
        <fullName evidence="1">Large ribosomal subunit protein uL29</fullName>
    </recommendedName>
    <alternativeName>
        <fullName evidence="2">50S ribosomal protein L29</fullName>
    </alternativeName>
</protein>
<proteinExistence type="inferred from homology"/>
<sequence length="68" mass="7868">MAAMKTADIRAMTPDQMDDAITSLKKERFNLRFQRATGQLENTSRMREARRDIARIKTIAAQKRDAKK</sequence>
<comment type="similarity">
    <text evidence="1">Belongs to the universal ribosomal protein uL29 family.</text>
</comment>
<name>RL29_NITWN</name>
<accession>Q3SSV8</accession>
<keyword id="KW-1185">Reference proteome</keyword>
<keyword id="KW-0687">Ribonucleoprotein</keyword>
<keyword id="KW-0689">Ribosomal protein</keyword>
<dbReference type="EMBL" id="CP000115">
    <property type="protein sequence ID" value="ABA04633.1"/>
    <property type="molecule type" value="Genomic_DNA"/>
</dbReference>
<dbReference type="RefSeq" id="WP_011314647.1">
    <property type="nucleotide sequence ID" value="NC_007406.1"/>
</dbReference>
<dbReference type="SMR" id="Q3SSV8"/>
<dbReference type="STRING" id="323098.Nwi_1372"/>
<dbReference type="KEGG" id="nwi:Nwi_1372"/>
<dbReference type="eggNOG" id="COG0255">
    <property type="taxonomic scope" value="Bacteria"/>
</dbReference>
<dbReference type="HOGENOM" id="CLU_158491_1_0_5"/>
<dbReference type="OrthoDB" id="9815192at2"/>
<dbReference type="Proteomes" id="UP000002531">
    <property type="component" value="Chromosome"/>
</dbReference>
<dbReference type="GO" id="GO:0022625">
    <property type="term" value="C:cytosolic large ribosomal subunit"/>
    <property type="evidence" value="ECO:0007669"/>
    <property type="project" value="TreeGrafter"/>
</dbReference>
<dbReference type="GO" id="GO:0003735">
    <property type="term" value="F:structural constituent of ribosome"/>
    <property type="evidence" value="ECO:0007669"/>
    <property type="project" value="InterPro"/>
</dbReference>
<dbReference type="GO" id="GO:0006412">
    <property type="term" value="P:translation"/>
    <property type="evidence" value="ECO:0007669"/>
    <property type="project" value="UniProtKB-UniRule"/>
</dbReference>
<dbReference type="CDD" id="cd00427">
    <property type="entry name" value="Ribosomal_L29_HIP"/>
    <property type="match status" value="1"/>
</dbReference>
<dbReference type="FunFam" id="1.10.287.310:FF:000005">
    <property type="entry name" value="50S ribosomal protein L29"/>
    <property type="match status" value="1"/>
</dbReference>
<dbReference type="Gene3D" id="1.10.287.310">
    <property type="match status" value="1"/>
</dbReference>
<dbReference type="HAMAP" id="MF_00374">
    <property type="entry name" value="Ribosomal_uL29"/>
    <property type="match status" value="1"/>
</dbReference>
<dbReference type="InterPro" id="IPR050063">
    <property type="entry name" value="Ribosomal_protein_uL29"/>
</dbReference>
<dbReference type="InterPro" id="IPR001854">
    <property type="entry name" value="Ribosomal_uL29"/>
</dbReference>
<dbReference type="InterPro" id="IPR018254">
    <property type="entry name" value="Ribosomal_uL29_CS"/>
</dbReference>
<dbReference type="InterPro" id="IPR036049">
    <property type="entry name" value="Ribosomal_uL29_sf"/>
</dbReference>
<dbReference type="NCBIfam" id="TIGR00012">
    <property type="entry name" value="L29"/>
    <property type="match status" value="1"/>
</dbReference>
<dbReference type="PANTHER" id="PTHR10916">
    <property type="entry name" value="60S RIBOSOMAL PROTEIN L35/50S RIBOSOMAL PROTEIN L29"/>
    <property type="match status" value="1"/>
</dbReference>
<dbReference type="PANTHER" id="PTHR10916:SF0">
    <property type="entry name" value="LARGE RIBOSOMAL SUBUNIT PROTEIN UL29C"/>
    <property type="match status" value="1"/>
</dbReference>
<dbReference type="Pfam" id="PF00831">
    <property type="entry name" value="Ribosomal_L29"/>
    <property type="match status" value="1"/>
</dbReference>
<dbReference type="SUPFAM" id="SSF46561">
    <property type="entry name" value="Ribosomal protein L29 (L29p)"/>
    <property type="match status" value="1"/>
</dbReference>
<dbReference type="PROSITE" id="PS00579">
    <property type="entry name" value="RIBOSOMAL_L29"/>
    <property type="match status" value="1"/>
</dbReference>
<reference key="1">
    <citation type="journal article" date="2006" name="Appl. Environ. Microbiol.">
        <title>Genome sequence of the chemolithoautotrophic nitrite-oxidizing bacterium Nitrobacter winogradskyi Nb-255.</title>
        <authorList>
            <person name="Starkenburg S.R."/>
            <person name="Chain P.S.G."/>
            <person name="Sayavedra-Soto L.A."/>
            <person name="Hauser L."/>
            <person name="Land M.L."/>
            <person name="Larimer F.W."/>
            <person name="Malfatti S.A."/>
            <person name="Klotz M.G."/>
            <person name="Bottomley P.J."/>
            <person name="Arp D.J."/>
            <person name="Hickey W.J."/>
        </authorList>
    </citation>
    <scope>NUCLEOTIDE SEQUENCE [LARGE SCALE GENOMIC DNA]</scope>
    <source>
        <strain>ATCC 25391 / DSM 10237 / CIP 104748 / NCIMB 11846 / Nb-255</strain>
    </source>
</reference>
<feature type="chain" id="PRO_1000007542" description="Large ribosomal subunit protein uL29">
    <location>
        <begin position="1"/>
        <end position="68"/>
    </location>
</feature>
<organism>
    <name type="scientific">Nitrobacter winogradskyi (strain ATCC 25391 / DSM 10237 / CIP 104748 / NCIMB 11846 / Nb-255)</name>
    <dbReference type="NCBI Taxonomy" id="323098"/>
    <lineage>
        <taxon>Bacteria</taxon>
        <taxon>Pseudomonadati</taxon>
        <taxon>Pseudomonadota</taxon>
        <taxon>Alphaproteobacteria</taxon>
        <taxon>Hyphomicrobiales</taxon>
        <taxon>Nitrobacteraceae</taxon>
        <taxon>Nitrobacter</taxon>
    </lineage>
</organism>